<dbReference type="EMBL" id="CP001344">
    <property type="protein sequence ID" value="ACL43677.1"/>
    <property type="molecule type" value="Genomic_DNA"/>
</dbReference>
<dbReference type="SMR" id="B8HMR2"/>
<dbReference type="STRING" id="395961.Cyan7425_1300"/>
<dbReference type="KEGG" id="cyn:Cyan7425_1300"/>
<dbReference type="eggNOG" id="COG0255">
    <property type="taxonomic scope" value="Bacteria"/>
</dbReference>
<dbReference type="HOGENOM" id="CLU_158491_0_0_3"/>
<dbReference type="GO" id="GO:0022625">
    <property type="term" value="C:cytosolic large ribosomal subunit"/>
    <property type="evidence" value="ECO:0007669"/>
    <property type="project" value="TreeGrafter"/>
</dbReference>
<dbReference type="GO" id="GO:0003735">
    <property type="term" value="F:structural constituent of ribosome"/>
    <property type="evidence" value="ECO:0007669"/>
    <property type="project" value="InterPro"/>
</dbReference>
<dbReference type="GO" id="GO:0006412">
    <property type="term" value="P:translation"/>
    <property type="evidence" value="ECO:0007669"/>
    <property type="project" value="UniProtKB-UniRule"/>
</dbReference>
<dbReference type="Gene3D" id="1.10.287.310">
    <property type="match status" value="1"/>
</dbReference>
<dbReference type="HAMAP" id="MF_00374">
    <property type="entry name" value="Ribosomal_uL29"/>
    <property type="match status" value="1"/>
</dbReference>
<dbReference type="InterPro" id="IPR050063">
    <property type="entry name" value="Ribosomal_protein_uL29"/>
</dbReference>
<dbReference type="InterPro" id="IPR001854">
    <property type="entry name" value="Ribosomal_uL29"/>
</dbReference>
<dbReference type="InterPro" id="IPR018254">
    <property type="entry name" value="Ribosomal_uL29_CS"/>
</dbReference>
<dbReference type="InterPro" id="IPR036049">
    <property type="entry name" value="Ribosomal_uL29_sf"/>
</dbReference>
<dbReference type="NCBIfam" id="TIGR00012">
    <property type="entry name" value="L29"/>
    <property type="match status" value="1"/>
</dbReference>
<dbReference type="PANTHER" id="PTHR10916">
    <property type="entry name" value="60S RIBOSOMAL PROTEIN L35/50S RIBOSOMAL PROTEIN L29"/>
    <property type="match status" value="1"/>
</dbReference>
<dbReference type="PANTHER" id="PTHR10916:SF0">
    <property type="entry name" value="LARGE RIBOSOMAL SUBUNIT PROTEIN UL29C"/>
    <property type="match status" value="1"/>
</dbReference>
<dbReference type="Pfam" id="PF00831">
    <property type="entry name" value="Ribosomal_L29"/>
    <property type="match status" value="1"/>
</dbReference>
<dbReference type="SUPFAM" id="SSF46561">
    <property type="entry name" value="Ribosomal protein L29 (L29p)"/>
    <property type="match status" value="1"/>
</dbReference>
<dbReference type="PROSITE" id="PS00579">
    <property type="entry name" value="RIBOSOMAL_L29"/>
    <property type="match status" value="1"/>
</dbReference>
<sequence>MALSKMKDLLDLSDAEVETQILDLKRQLFQLRLQKATRQEVKPHQFKHLRHQLAQLMTLERQRQLTQQQTSVQE</sequence>
<name>RL29_CYAP4</name>
<keyword id="KW-0687">Ribonucleoprotein</keyword>
<keyword id="KW-0689">Ribosomal protein</keyword>
<protein>
    <recommendedName>
        <fullName evidence="1">Large ribosomal subunit protein uL29</fullName>
    </recommendedName>
    <alternativeName>
        <fullName evidence="2">50S ribosomal protein L29</fullName>
    </alternativeName>
</protein>
<evidence type="ECO:0000255" key="1">
    <source>
        <dbReference type="HAMAP-Rule" id="MF_00374"/>
    </source>
</evidence>
<evidence type="ECO:0000305" key="2"/>
<reference key="1">
    <citation type="journal article" date="2011" name="MBio">
        <title>Novel metabolic attributes of the genus Cyanothece, comprising a group of unicellular nitrogen-fixing Cyanobacteria.</title>
        <authorList>
            <person name="Bandyopadhyay A."/>
            <person name="Elvitigala T."/>
            <person name="Welsh E."/>
            <person name="Stockel J."/>
            <person name="Liberton M."/>
            <person name="Min H."/>
            <person name="Sherman L.A."/>
            <person name="Pakrasi H.B."/>
        </authorList>
    </citation>
    <scope>NUCLEOTIDE SEQUENCE [LARGE SCALE GENOMIC DNA]</scope>
    <source>
        <strain>PCC 7425 / ATCC 29141</strain>
    </source>
</reference>
<organism>
    <name type="scientific">Cyanothece sp. (strain PCC 7425 / ATCC 29141)</name>
    <dbReference type="NCBI Taxonomy" id="395961"/>
    <lineage>
        <taxon>Bacteria</taxon>
        <taxon>Bacillati</taxon>
        <taxon>Cyanobacteriota</taxon>
        <taxon>Cyanophyceae</taxon>
        <taxon>Gomontiellales</taxon>
        <taxon>Cyanothecaceae</taxon>
        <taxon>Cyanothece</taxon>
    </lineage>
</organism>
<accession>B8HMR2</accession>
<gene>
    <name evidence="1" type="primary">rpmC</name>
    <name evidence="1" type="synonym">rpl29</name>
    <name type="ordered locus">Cyan7425_1300</name>
</gene>
<feature type="chain" id="PRO_1000194011" description="Large ribosomal subunit protein uL29">
    <location>
        <begin position="1"/>
        <end position="74"/>
    </location>
</feature>
<comment type="similarity">
    <text evidence="1">Belongs to the universal ribosomal protein uL29 family.</text>
</comment>
<proteinExistence type="inferred from homology"/>